<dbReference type="EC" id="2.1.1.192" evidence="1"/>
<dbReference type="EMBL" id="CP000260">
    <property type="protein sequence ID" value="ABF34342.1"/>
    <property type="molecule type" value="Genomic_DNA"/>
</dbReference>
<dbReference type="SMR" id="Q1JG02"/>
<dbReference type="KEGG" id="sph:MGAS10270_Spy1277"/>
<dbReference type="HOGENOM" id="CLU_029101_0_1_9"/>
<dbReference type="Proteomes" id="UP000002436">
    <property type="component" value="Chromosome"/>
</dbReference>
<dbReference type="GO" id="GO:0005737">
    <property type="term" value="C:cytoplasm"/>
    <property type="evidence" value="ECO:0007669"/>
    <property type="project" value="UniProtKB-SubCell"/>
</dbReference>
<dbReference type="GO" id="GO:0051539">
    <property type="term" value="F:4 iron, 4 sulfur cluster binding"/>
    <property type="evidence" value="ECO:0007669"/>
    <property type="project" value="UniProtKB-UniRule"/>
</dbReference>
<dbReference type="GO" id="GO:0046872">
    <property type="term" value="F:metal ion binding"/>
    <property type="evidence" value="ECO:0007669"/>
    <property type="project" value="UniProtKB-KW"/>
</dbReference>
<dbReference type="GO" id="GO:0070040">
    <property type="term" value="F:rRNA (adenine(2503)-C2-)-methyltransferase activity"/>
    <property type="evidence" value="ECO:0007669"/>
    <property type="project" value="UniProtKB-UniRule"/>
</dbReference>
<dbReference type="GO" id="GO:0019843">
    <property type="term" value="F:rRNA binding"/>
    <property type="evidence" value="ECO:0007669"/>
    <property type="project" value="UniProtKB-UniRule"/>
</dbReference>
<dbReference type="GO" id="GO:0002935">
    <property type="term" value="F:tRNA (adenine(37)-C2)-methyltransferase activity"/>
    <property type="evidence" value="ECO:0007669"/>
    <property type="project" value="UniProtKB-UniRule"/>
</dbReference>
<dbReference type="GO" id="GO:0000049">
    <property type="term" value="F:tRNA binding"/>
    <property type="evidence" value="ECO:0007669"/>
    <property type="project" value="UniProtKB-UniRule"/>
</dbReference>
<dbReference type="GO" id="GO:0070475">
    <property type="term" value="P:rRNA base methylation"/>
    <property type="evidence" value="ECO:0007669"/>
    <property type="project" value="UniProtKB-UniRule"/>
</dbReference>
<dbReference type="GO" id="GO:0030488">
    <property type="term" value="P:tRNA methylation"/>
    <property type="evidence" value="ECO:0007669"/>
    <property type="project" value="UniProtKB-UniRule"/>
</dbReference>
<dbReference type="CDD" id="cd01335">
    <property type="entry name" value="Radical_SAM"/>
    <property type="match status" value="1"/>
</dbReference>
<dbReference type="FunFam" id="3.20.20.70:FF:000014">
    <property type="entry name" value="Probable dual-specificity RNA methyltransferase RlmN"/>
    <property type="match status" value="1"/>
</dbReference>
<dbReference type="Gene3D" id="1.10.150.530">
    <property type="match status" value="1"/>
</dbReference>
<dbReference type="Gene3D" id="3.20.20.70">
    <property type="entry name" value="Aldolase class I"/>
    <property type="match status" value="1"/>
</dbReference>
<dbReference type="HAMAP" id="MF_01849">
    <property type="entry name" value="RNA_methyltr_RlmN"/>
    <property type="match status" value="1"/>
</dbReference>
<dbReference type="InterPro" id="IPR013785">
    <property type="entry name" value="Aldolase_TIM"/>
</dbReference>
<dbReference type="InterPro" id="IPR040072">
    <property type="entry name" value="Methyltransferase_A"/>
</dbReference>
<dbReference type="InterPro" id="IPR048641">
    <property type="entry name" value="RlmN_N"/>
</dbReference>
<dbReference type="InterPro" id="IPR027492">
    <property type="entry name" value="RNA_MTrfase_RlmN"/>
</dbReference>
<dbReference type="InterPro" id="IPR004383">
    <property type="entry name" value="rRNA_lsu_MTrfase_RlmN/Cfr"/>
</dbReference>
<dbReference type="InterPro" id="IPR007197">
    <property type="entry name" value="rSAM"/>
</dbReference>
<dbReference type="NCBIfam" id="TIGR00048">
    <property type="entry name" value="rRNA_mod_RlmN"/>
    <property type="match status" value="1"/>
</dbReference>
<dbReference type="PANTHER" id="PTHR30544">
    <property type="entry name" value="23S RRNA METHYLTRANSFERASE"/>
    <property type="match status" value="1"/>
</dbReference>
<dbReference type="PANTHER" id="PTHR30544:SF5">
    <property type="entry name" value="RADICAL SAM CORE DOMAIN-CONTAINING PROTEIN"/>
    <property type="match status" value="1"/>
</dbReference>
<dbReference type="Pfam" id="PF04055">
    <property type="entry name" value="Radical_SAM"/>
    <property type="match status" value="1"/>
</dbReference>
<dbReference type="Pfam" id="PF21016">
    <property type="entry name" value="RlmN_N"/>
    <property type="match status" value="1"/>
</dbReference>
<dbReference type="PIRSF" id="PIRSF006004">
    <property type="entry name" value="CHP00048"/>
    <property type="match status" value="1"/>
</dbReference>
<dbReference type="SFLD" id="SFLDF00275">
    <property type="entry name" value="adenosine_C2_methyltransferase"/>
    <property type="match status" value="1"/>
</dbReference>
<dbReference type="SFLD" id="SFLDS00029">
    <property type="entry name" value="Radical_SAM"/>
    <property type="match status" value="1"/>
</dbReference>
<dbReference type="SUPFAM" id="SSF102114">
    <property type="entry name" value="Radical SAM enzymes"/>
    <property type="match status" value="1"/>
</dbReference>
<dbReference type="PROSITE" id="PS51918">
    <property type="entry name" value="RADICAL_SAM"/>
    <property type="match status" value="1"/>
</dbReference>
<gene>
    <name evidence="1" type="primary">rlmN</name>
    <name type="ordered locus">MGAS10270_Spy1277</name>
</gene>
<evidence type="ECO:0000255" key="1">
    <source>
        <dbReference type="HAMAP-Rule" id="MF_01849"/>
    </source>
</evidence>
<evidence type="ECO:0000255" key="2">
    <source>
        <dbReference type="PROSITE-ProRule" id="PRU01266"/>
    </source>
</evidence>
<reference key="1">
    <citation type="journal article" date="2006" name="Proc. Natl. Acad. Sci. U.S.A.">
        <title>Molecular genetic anatomy of inter- and intraserotype variation in the human bacterial pathogen group A Streptococcus.</title>
        <authorList>
            <person name="Beres S.B."/>
            <person name="Richter E.W."/>
            <person name="Nagiec M.J."/>
            <person name="Sumby P."/>
            <person name="Porcella S.F."/>
            <person name="DeLeo F.R."/>
            <person name="Musser J.M."/>
        </authorList>
    </citation>
    <scope>NUCLEOTIDE SEQUENCE [LARGE SCALE GENOMIC DNA]</scope>
    <source>
        <strain>MGAS10270</strain>
    </source>
</reference>
<keyword id="KW-0004">4Fe-4S</keyword>
<keyword id="KW-0963">Cytoplasm</keyword>
<keyword id="KW-1015">Disulfide bond</keyword>
<keyword id="KW-0408">Iron</keyword>
<keyword id="KW-0411">Iron-sulfur</keyword>
<keyword id="KW-0479">Metal-binding</keyword>
<keyword id="KW-0489">Methyltransferase</keyword>
<keyword id="KW-0698">rRNA processing</keyword>
<keyword id="KW-0949">S-adenosyl-L-methionine</keyword>
<keyword id="KW-0808">Transferase</keyword>
<keyword id="KW-0819">tRNA processing</keyword>
<protein>
    <recommendedName>
        <fullName evidence="1">Probable dual-specificity RNA methyltransferase RlmN</fullName>
        <ecNumber evidence="1">2.1.1.192</ecNumber>
    </recommendedName>
    <alternativeName>
        <fullName evidence="1">23S rRNA (adenine(2503)-C(2))-methyltransferase</fullName>
    </alternativeName>
    <alternativeName>
        <fullName evidence="1">23S rRNA m2A2503 methyltransferase</fullName>
    </alternativeName>
    <alternativeName>
        <fullName evidence="1">Ribosomal RNA large subunit methyltransferase N</fullName>
    </alternativeName>
    <alternativeName>
        <fullName evidence="1">tRNA (adenine(37)-C(2))-methyltransferase</fullName>
    </alternativeName>
    <alternativeName>
        <fullName evidence="1">tRNA m2A37 methyltransferase</fullName>
    </alternativeName>
</protein>
<name>RLMN_STRPD</name>
<proteinExistence type="inferred from homology"/>
<feature type="chain" id="PRO_0000350462" description="Probable dual-specificity RNA methyltransferase RlmN">
    <location>
        <begin position="1"/>
        <end position="359"/>
    </location>
</feature>
<feature type="domain" description="Radical SAM core" evidence="2">
    <location>
        <begin position="97"/>
        <end position="329"/>
    </location>
</feature>
<feature type="active site" description="Proton acceptor" evidence="1">
    <location>
        <position position="91"/>
    </location>
</feature>
<feature type="active site" description="S-methylcysteine intermediate" evidence="1">
    <location>
        <position position="340"/>
    </location>
</feature>
<feature type="binding site" evidence="1">
    <location>
        <position position="111"/>
    </location>
    <ligand>
        <name>[4Fe-4S] cluster</name>
        <dbReference type="ChEBI" id="CHEBI:49883"/>
        <note>4Fe-4S-S-AdoMet</note>
    </ligand>
</feature>
<feature type="binding site" evidence="1">
    <location>
        <position position="115"/>
    </location>
    <ligand>
        <name>[4Fe-4S] cluster</name>
        <dbReference type="ChEBI" id="CHEBI:49883"/>
        <note>4Fe-4S-S-AdoMet</note>
    </ligand>
</feature>
<feature type="binding site" evidence="1">
    <location>
        <position position="118"/>
    </location>
    <ligand>
        <name>[4Fe-4S] cluster</name>
        <dbReference type="ChEBI" id="CHEBI:49883"/>
        <note>4Fe-4S-S-AdoMet</note>
    </ligand>
</feature>
<feature type="binding site" evidence="1">
    <location>
        <begin position="163"/>
        <end position="164"/>
    </location>
    <ligand>
        <name>S-adenosyl-L-methionine</name>
        <dbReference type="ChEBI" id="CHEBI:59789"/>
    </ligand>
</feature>
<feature type="binding site" evidence="1">
    <location>
        <position position="195"/>
    </location>
    <ligand>
        <name>S-adenosyl-L-methionine</name>
        <dbReference type="ChEBI" id="CHEBI:59789"/>
    </ligand>
</feature>
<feature type="binding site" evidence="1">
    <location>
        <begin position="218"/>
        <end position="220"/>
    </location>
    <ligand>
        <name>S-adenosyl-L-methionine</name>
        <dbReference type="ChEBI" id="CHEBI:59789"/>
    </ligand>
</feature>
<feature type="binding site" evidence="1">
    <location>
        <position position="296"/>
    </location>
    <ligand>
        <name>S-adenosyl-L-methionine</name>
        <dbReference type="ChEBI" id="CHEBI:59789"/>
    </ligand>
</feature>
<feature type="disulfide bond" description="(transient)" evidence="1">
    <location>
        <begin position="104"/>
        <end position="340"/>
    </location>
</feature>
<comment type="function">
    <text evidence="1">Specifically methylates position 2 of adenine 2503 in 23S rRNA and position 2 of adenine 37 in tRNAs.</text>
</comment>
<comment type="catalytic activity">
    <reaction evidence="1">
        <text>adenosine(2503) in 23S rRNA + 2 reduced [2Fe-2S]-[ferredoxin] + 2 S-adenosyl-L-methionine = 2-methyladenosine(2503) in 23S rRNA + 5'-deoxyadenosine + L-methionine + 2 oxidized [2Fe-2S]-[ferredoxin] + S-adenosyl-L-homocysteine</text>
        <dbReference type="Rhea" id="RHEA:42916"/>
        <dbReference type="Rhea" id="RHEA-COMP:10000"/>
        <dbReference type="Rhea" id="RHEA-COMP:10001"/>
        <dbReference type="Rhea" id="RHEA-COMP:10152"/>
        <dbReference type="Rhea" id="RHEA-COMP:10282"/>
        <dbReference type="ChEBI" id="CHEBI:17319"/>
        <dbReference type="ChEBI" id="CHEBI:33737"/>
        <dbReference type="ChEBI" id="CHEBI:33738"/>
        <dbReference type="ChEBI" id="CHEBI:57844"/>
        <dbReference type="ChEBI" id="CHEBI:57856"/>
        <dbReference type="ChEBI" id="CHEBI:59789"/>
        <dbReference type="ChEBI" id="CHEBI:74411"/>
        <dbReference type="ChEBI" id="CHEBI:74497"/>
        <dbReference type="EC" id="2.1.1.192"/>
    </reaction>
</comment>
<comment type="catalytic activity">
    <reaction evidence="1">
        <text>adenosine(37) in tRNA + 2 reduced [2Fe-2S]-[ferredoxin] + 2 S-adenosyl-L-methionine = 2-methyladenosine(37) in tRNA + 5'-deoxyadenosine + L-methionine + 2 oxidized [2Fe-2S]-[ferredoxin] + S-adenosyl-L-homocysteine</text>
        <dbReference type="Rhea" id="RHEA:43332"/>
        <dbReference type="Rhea" id="RHEA-COMP:10000"/>
        <dbReference type="Rhea" id="RHEA-COMP:10001"/>
        <dbReference type="Rhea" id="RHEA-COMP:10162"/>
        <dbReference type="Rhea" id="RHEA-COMP:10485"/>
        <dbReference type="ChEBI" id="CHEBI:17319"/>
        <dbReference type="ChEBI" id="CHEBI:33737"/>
        <dbReference type="ChEBI" id="CHEBI:33738"/>
        <dbReference type="ChEBI" id="CHEBI:57844"/>
        <dbReference type="ChEBI" id="CHEBI:57856"/>
        <dbReference type="ChEBI" id="CHEBI:59789"/>
        <dbReference type="ChEBI" id="CHEBI:74411"/>
        <dbReference type="ChEBI" id="CHEBI:74497"/>
        <dbReference type="EC" id="2.1.1.192"/>
    </reaction>
</comment>
<comment type="cofactor">
    <cofactor evidence="1">
        <name>[4Fe-4S] cluster</name>
        <dbReference type="ChEBI" id="CHEBI:49883"/>
    </cofactor>
    <text evidence="1">Binds 1 [4Fe-4S] cluster. The cluster is coordinated with 3 cysteines and an exchangeable S-adenosyl-L-methionine.</text>
</comment>
<comment type="subcellular location">
    <subcellularLocation>
        <location evidence="1">Cytoplasm</location>
    </subcellularLocation>
</comment>
<comment type="miscellaneous">
    <text evidence="1">Reaction proceeds by a ping-pong mechanism involving intermediate methylation of a conserved cysteine residue.</text>
</comment>
<comment type="similarity">
    <text evidence="1">Belongs to the radical SAM superfamily. RlmN family.</text>
</comment>
<sequence length="359" mass="41111">MKPSIYSLTRDELIEWAVERGQKQFRATQIWDWLYKKRVQSFEEMTNISKDFVSILNDSFCVNPLKQRVVQESADGTVKYLFELPDGMLIETVLMRQHYGHSVCVTTQVGCNIGCTFCASGLIKKQRDLNSGEITAQIMLVQKYFDDRKQGERVSHVVVMGIGEPFDNYKNVMCFLRVINDDNGLAIGARHITVSTSGLAHKIRDFANEGVQVNLAVSLHAPNNDLRSSIMRVNRSFPLEKLFSAIEYYIEKTNRRVTFEYIMLNEVNDSIKQAQELADLTKTIRKLSYVNLIPYNPVSEHDQYSRSPKERVLAFYDVLKKNGVNCVVRQEHGTDIDAACGQLRSKTMKKDREKVTATK</sequence>
<organism>
    <name type="scientific">Streptococcus pyogenes serotype M2 (strain MGAS10270)</name>
    <dbReference type="NCBI Taxonomy" id="370552"/>
    <lineage>
        <taxon>Bacteria</taxon>
        <taxon>Bacillati</taxon>
        <taxon>Bacillota</taxon>
        <taxon>Bacilli</taxon>
        <taxon>Lactobacillales</taxon>
        <taxon>Streptococcaceae</taxon>
        <taxon>Streptococcus</taxon>
    </lineage>
</organism>
<accession>Q1JG02</accession>